<reference key="1">
    <citation type="journal article" date="2004" name="Nat. Genet.">
        <title>Complete sequencing and characterization of 21,243 full-length human cDNAs.</title>
        <authorList>
            <person name="Ota T."/>
            <person name="Suzuki Y."/>
            <person name="Nishikawa T."/>
            <person name="Otsuki T."/>
            <person name="Sugiyama T."/>
            <person name="Irie R."/>
            <person name="Wakamatsu A."/>
            <person name="Hayashi K."/>
            <person name="Sato H."/>
            <person name="Nagai K."/>
            <person name="Kimura K."/>
            <person name="Makita H."/>
            <person name="Sekine M."/>
            <person name="Obayashi M."/>
            <person name="Nishi T."/>
            <person name="Shibahara T."/>
            <person name="Tanaka T."/>
            <person name="Ishii S."/>
            <person name="Yamamoto J."/>
            <person name="Saito K."/>
            <person name="Kawai Y."/>
            <person name="Isono Y."/>
            <person name="Nakamura Y."/>
            <person name="Nagahari K."/>
            <person name="Murakami K."/>
            <person name="Yasuda T."/>
            <person name="Iwayanagi T."/>
            <person name="Wagatsuma M."/>
            <person name="Shiratori A."/>
            <person name="Sudo H."/>
            <person name="Hosoiri T."/>
            <person name="Kaku Y."/>
            <person name="Kodaira H."/>
            <person name="Kondo H."/>
            <person name="Sugawara M."/>
            <person name="Takahashi M."/>
            <person name="Kanda K."/>
            <person name="Yokoi T."/>
            <person name="Furuya T."/>
            <person name="Kikkawa E."/>
            <person name="Omura Y."/>
            <person name="Abe K."/>
            <person name="Kamihara K."/>
            <person name="Katsuta N."/>
            <person name="Sato K."/>
            <person name="Tanikawa M."/>
            <person name="Yamazaki M."/>
            <person name="Ninomiya K."/>
            <person name="Ishibashi T."/>
            <person name="Yamashita H."/>
            <person name="Murakawa K."/>
            <person name="Fujimori K."/>
            <person name="Tanai H."/>
            <person name="Kimata M."/>
            <person name="Watanabe M."/>
            <person name="Hiraoka S."/>
            <person name="Chiba Y."/>
            <person name="Ishida S."/>
            <person name="Ono Y."/>
            <person name="Takiguchi S."/>
            <person name="Watanabe S."/>
            <person name="Yosida M."/>
            <person name="Hotuta T."/>
            <person name="Kusano J."/>
            <person name="Kanehori K."/>
            <person name="Takahashi-Fujii A."/>
            <person name="Hara H."/>
            <person name="Tanase T.-O."/>
            <person name="Nomura Y."/>
            <person name="Togiya S."/>
            <person name="Komai F."/>
            <person name="Hara R."/>
            <person name="Takeuchi K."/>
            <person name="Arita M."/>
            <person name="Imose N."/>
            <person name="Musashino K."/>
            <person name="Yuuki H."/>
            <person name="Oshima A."/>
            <person name="Sasaki N."/>
            <person name="Aotsuka S."/>
            <person name="Yoshikawa Y."/>
            <person name="Matsunawa H."/>
            <person name="Ichihara T."/>
            <person name="Shiohata N."/>
            <person name="Sano S."/>
            <person name="Moriya S."/>
            <person name="Momiyama H."/>
            <person name="Satoh N."/>
            <person name="Takami S."/>
            <person name="Terashima Y."/>
            <person name="Suzuki O."/>
            <person name="Nakagawa S."/>
            <person name="Senoh A."/>
            <person name="Mizoguchi H."/>
            <person name="Goto Y."/>
            <person name="Shimizu F."/>
            <person name="Wakebe H."/>
            <person name="Hishigaki H."/>
            <person name="Watanabe T."/>
            <person name="Sugiyama A."/>
            <person name="Takemoto M."/>
            <person name="Kawakami B."/>
            <person name="Yamazaki M."/>
            <person name="Watanabe K."/>
            <person name="Kumagai A."/>
            <person name="Itakura S."/>
            <person name="Fukuzumi Y."/>
            <person name="Fujimori Y."/>
            <person name="Komiyama M."/>
            <person name="Tashiro H."/>
            <person name="Tanigami A."/>
            <person name="Fujiwara T."/>
            <person name="Ono T."/>
            <person name="Yamada K."/>
            <person name="Fujii Y."/>
            <person name="Ozaki K."/>
            <person name="Hirao M."/>
            <person name="Ohmori Y."/>
            <person name="Kawabata A."/>
            <person name="Hikiji T."/>
            <person name="Kobatake N."/>
            <person name="Inagaki H."/>
            <person name="Ikema Y."/>
            <person name="Okamoto S."/>
            <person name="Okitani R."/>
            <person name="Kawakami T."/>
            <person name="Noguchi S."/>
            <person name="Itoh T."/>
            <person name="Shigeta K."/>
            <person name="Senba T."/>
            <person name="Matsumura K."/>
            <person name="Nakajima Y."/>
            <person name="Mizuno T."/>
            <person name="Morinaga M."/>
            <person name="Sasaki M."/>
            <person name="Togashi T."/>
            <person name="Oyama M."/>
            <person name="Hata H."/>
            <person name="Watanabe M."/>
            <person name="Komatsu T."/>
            <person name="Mizushima-Sugano J."/>
            <person name="Satoh T."/>
            <person name="Shirai Y."/>
            <person name="Takahashi Y."/>
            <person name="Nakagawa K."/>
            <person name="Okumura K."/>
            <person name="Nagase T."/>
            <person name="Nomura N."/>
            <person name="Kikuchi H."/>
            <person name="Masuho Y."/>
            <person name="Yamashita R."/>
            <person name="Nakai K."/>
            <person name="Yada T."/>
            <person name="Nakamura Y."/>
            <person name="Ohara O."/>
            <person name="Isogai T."/>
            <person name="Sugano S."/>
        </authorList>
    </citation>
    <scope>NUCLEOTIDE SEQUENCE [LARGE SCALE MRNA]</scope>
    <source>
        <tissue>Cerebellum</tissue>
    </source>
</reference>
<reference key="2">
    <citation type="journal article" date="2004" name="Genome Res.">
        <title>The status, quality, and expansion of the NIH full-length cDNA project: the Mammalian Gene Collection (MGC).</title>
        <authorList>
            <consortium name="The MGC Project Team"/>
        </authorList>
    </citation>
    <scope>NUCLEOTIDE SEQUENCE [LARGE SCALE MRNA]</scope>
</reference>
<proteinExistence type="evidence at protein level"/>
<sequence length="339" mass="40246">MSGQLERCEREWHELEGEFQELQETHRIYKQKLEELAALQTLCSSSISKQKKHLKDLKLTLQRCKRHASREEAELVQQMAANIKERQDVFFDMEAYLPKKNGLYLNLVLGNVNVTLLSNQAKFAYKDEYEKFKLYLTIILLLGAVACRFVLHYRVTDEVFNFLLVWYYCTLTIRESILISNGSRIKGWWVSHHYVSTFLSGVMLTWPNGPIYQKFRNQFLAFSIFQSCVQFLQYYYQRGCLYRLRALGERNHLDLTVEGFQSWMWRGLTFLLPFLFCGHFWQLYNAVTLFELSSHEECREWQVFVLAFTFLILFLGNFLTTLKVVHAKLQKNRGKTKQP</sequence>
<organism>
    <name type="scientific">Homo sapiens</name>
    <name type="common">Human</name>
    <dbReference type="NCBI Taxonomy" id="9606"/>
    <lineage>
        <taxon>Eukaryota</taxon>
        <taxon>Metazoa</taxon>
        <taxon>Chordata</taxon>
        <taxon>Craniata</taxon>
        <taxon>Vertebrata</taxon>
        <taxon>Euteleostomi</taxon>
        <taxon>Mammalia</taxon>
        <taxon>Eutheria</taxon>
        <taxon>Euarchontoglires</taxon>
        <taxon>Primates</taxon>
        <taxon>Haplorrhini</taxon>
        <taxon>Catarrhini</taxon>
        <taxon>Hominidae</taxon>
        <taxon>Homo</taxon>
    </lineage>
</organism>
<name>T120B_HUMAN</name>
<keyword id="KW-0002">3D-structure</keyword>
<keyword id="KW-0175">Coiled coil</keyword>
<keyword id="KW-0472">Membrane</keyword>
<keyword id="KW-0539">Nucleus</keyword>
<keyword id="KW-1267">Proteomics identification</keyword>
<keyword id="KW-1185">Reference proteome</keyword>
<keyword id="KW-0812">Transmembrane</keyword>
<keyword id="KW-1133">Transmembrane helix</keyword>
<evidence type="ECO:0000250" key="1">
    <source>
        <dbReference type="UniProtKB" id="Q3TA38"/>
    </source>
</evidence>
<evidence type="ECO:0000255" key="2"/>
<evidence type="ECO:0000305" key="3"/>
<evidence type="ECO:0000312" key="4">
    <source>
        <dbReference type="HGNC" id="HGNC:32008"/>
    </source>
</evidence>
<gene>
    <name evidence="4" type="primary">TMEM120B</name>
</gene>
<comment type="function">
    <text evidence="1">Necessary for efficient adipogenesis. Does not show ion channel activity.</text>
</comment>
<comment type="subunit">
    <text evidence="1">Heterooligomer with TMEM120A.</text>
</comment>
<comment type="interaction">
    <interactant intactId="EBI-10171534">
        <id>A0PK00</id>
    </interactant>
    <interactant intactId="EBI-3904621">
        <id>P20292</id>
        <label>ALOX5AP</label>
    </interactant>
    <organismsDiffer>false</organismsDiffer>
    <experiments>3</experiments>
</comment>
<comment type="interaction">
    <interactant intactId="EBI-10171534">
        <id>A0PK00</id>
    </interactant>
    <interactant intactId="EBI-7054139">
        <id>Q68DC2</id>
        <label>ANKS6</label>
    </interactant>
    <organismsDiffer>false</organismsDiffer>
    <experiments>3</experiments>
</comment>
<comment type="interaction">
    <interactant intactId="EBI-10171534">
        <id>A0PK00</id>
    </interactant>
    <interactant intactId="EBI-3936819">
        <id>Q6Q788</id>
        <label>APOA5</label>
    </interactant>
    <organismsDiffer>false</organismsDiffer>
    <experiments>3</experiments>
</comment>
<comment type="interaction">
    <interactant intactId="EBI-10171534">
        <id>A0PK00</id>
    </interactant>
    <interactant intactId="EBI-13059134">
        <id>Q13520</id>
        <label>AQP6</label>
    </interactant>
    <organismsDiffer>false</organismsDiffer>
    <experiments>3</experiments>
</comment>
<comment type="interaction">
    <interactant intactId="EBI-10171534">
        <id>A0PK00</id>
    </interactant>
    <interactant intactId="EBI-19124986">
        <id>O94778</id>
        <label>AQP8</label>
    </interactant>
    <organismsDiffer>false</organismsDiffer>
    <experiments>3</experiments>
</comment>
<comment type="interaction">
    <interactant intactId="EBI-10171534">
        <id>A0PK00</id>
    </interactant>
    <interactant intactId="EBI-849893">
        <id>O60238</id>
        <label>BNIP3L</label>
    </interactant>
    <organismsDiffer>false</organismsDiffer>
    <experiments>3</experiments>
</comment>
<comment type="interaction">
    <interactant intactId="EBI-10171534">
        <id>A0PK00</id>
    </interactant>
    <interactant intactId="EBI-748961">
        <id>O95273</id>
        <label>CCNDBP1</label>
    </interactant>
    <organismsDiffer>false</organismsDiffer>
    <experiments>3</experiments>
</comment>
<comment type="interaction">
    <interactant intactId="EBI-10171534">
        <id>A0PK00</id>
    </interactant>
    <interactant intactId="EBI-12222807">
        <id>P04233-2</id>
        <label>CD74</label>
    </interactant>
    <organismsDiffer>false</organismsDiffer>
    <experiments>3</experiments>
</comment>
<comment type="interaction">
    <interactant intactId="EBI-10171534">
        <id>A0PK00</id>
    </interactant>
    <interactant intactId="EBI-372265">
        <id>P21964</id>
        <label>COMT</label>
    </interactant>
    <organismsDiffer>false</organismsDiffer>
    <experiments>3</experiments>
</comment>
<comment type="interaction">
    <interactant intactId="EBI-10171534">
        <id>A0PK00</id>
    </interactant>
    <interactant intactId="EBI-18013275">
        <id>Q7Z7G2</id>
        <label>CPLX4</label>
    </interactant>
    <organismsDiffer>false</organismsDiffer>
    <experiments>3</experiments>
</comment>
<comment type="interaction">
    <interactant intactId="EBI-10171534">
        <id>A0PK00</id>
    </interactant>
    <interactant intactId="EBI-6942903">
        <id>Q96BA8</id>
        <label>CREB3L1</label>
    </interactant>
    <organismsDiffer>false</organismsDiffer>
    <experiments>5</experiments>
</comment>
<comment type="interaction">
    <interactant intactId="EBI-10171534">
        <id>A0PK00</id>
    </interactant>
    <interactant intactId="EBI-3915253">
        <id>Q15125</id>
        <label>EBP</label>
    </interactant>
    <organismsDiffer>false</organismsDiffer>
    <experiments>3</experiments>
</comment>
<comment type="interaction">
    <interactant intactId="EBI-10171534">
        <id>A0PK00</id>
    </interactant>
    <interactant intactId="EBI-781551">
        <id>Q9Y282</id>
        <label>ERGIC3</label>
    </interactant>
    <organismsDiffer>false</organismsDiffer>
    <experiments>3</experiments>
</comment>
<comment type="interaction">
    <interactant intactId="EBI-10171534">
        <id>A0PK00</id>
    </interactant>
    <interactant intactId="EBI-2833872">
        <id>O15552</id>
        <label>FFAR2</label>
    </interactant>
    <organismsDiffer>false</organismsDiffer>
    <experiments>3</experiments>
</comment>
<comment type="interaction">
    <interactant intactId="EBI-10171534">
        <id>A0PK00</id>
    </interactant>
    <interactant intactId="EBI-3918971">
        <id>Q9Y680</id>
        <label>FKBP7</label>
    </interactant>
    <organismsDiffer>false</organismsDiffer>
    <experiments>3</experiments>
</comment>
<comment type="interaction">
    <interactant intactId="EBI-10171534">
        <id>A0PK00</id>
    </interactant>
    <interactant intactId="EBI-9304251">
        <id>Q05329</id>
        <label>GAD2</label>
    </interactant>
    <organismsDiffer>false</organismsDiffer>
    <experiments>3</experiments>
</comment>
<comment type="interaction">
    <interactant intactId="EBI-10171534">
        <id>A0PK00</id>
    </interactant>
    <interactant intactId="EBI-17565645">
        <id>P08034</id>
        <label>GJB1</label>
    </interactant>
    <organismsDiffer>false</organismsDiffer>
    <experiments>3</experiments>
</comment>
<comment type="interaction">
    <interactant intactId="EBI-10171534">
        <id>A0PK00</id>
    </interactant>
    <interactant intactId="EBI-3917143">
        <id>Q5T7V8</id>
        <label>GORAB</label>
    </interactant>
    <organismsDiffer>false</organismsDiffer>
    <experiments>3</experiments>
</comment>
<comment type="interaction">
    <interactant intactId="EBI-10171534">
        <id>A0PK00</id>
    </interactant>
    <interactant intactId="EBI-13345167">
        <id>Q8TDT2</id>
        <label>GPR152</label>
    </interactant>
    <organismsDiffer>false</organismsDiffer>
    <experiments>3</experiments>
</comment>
<comment type="interaction">
    <interactant intactId="EBI-10171534">
        <id>A0PK00</id>
    </interactant>
    <interactant intactId="EBI-13067820">
        <id>Q9NZD1</id>
        <label>GPRC5D</label>
    </interactant>
    <organismsDiffer>false</organismsDiffer>
    <experiments>3</experiments>
</comment>
<comment type="interaction">
    <interactant intactId="EBI-10171534">
        <id>A0PK00</id>
    </interactant>
    <interactant intactId="EBI-11721746">
        <id>Q8TED1</id>
        <label>GPX8</label>
    </interactant>
    <organismsDiffer>false</organismsDiffer>
    <experiments>3</experiments>
</comment>
<comment type="interaction">
    <interactant intactId="EBI-10171534">
        <id>A0PK00</id>
    </interactant>
    <interactant intactId="EBI-1052304">
        <id>Q8NBQ5</id>
        <label>HSD17B11</label>
    </interactant>
    <organismsDiffer>false</organismsDiffer>
    <experiments>3</experiments>
</comment>
<comment type="interaction">
    <interactant intactId="EBI-10171534">
        <id>A0PK00</id>
    </interactant>
    <interactant intactId="EBI-3905457">
        <id>P38484</id>
        <label>IFNGR2</label>
    </interactant>
    <organismsDiffer>false</organismsDiffer>
    <experiments>3</experiments>
</comment>
<comment type="interaction">
    <interactant intactId="EBI-10171534">
        <id>A0PK00</id>
    </interactant>
    <interactant intactId="EBI-80490">
        <id>P16871</id>
        <label>IL7R</label>
    </interactant>
    <organismsDiffer>false</organismsDiffer>
    <experiments>3</experiments>
</comment>
<comment type="interaction">
    <interactant intactId="EBI-10171534">
        <id>A0PK00</id>
    </interactant>
    <interactant intactId="EBI-10266796">
        <id>Q8N5M9</id>
        <label>JAGN1</label>
    </interactant>
    <organismsDiffer>false</organismsDiffer>
    <experiments>3</experiments>
</comment>
<comment type="interaction">
    <interactant intactId="EBI-10171534">
        <id>A0PK00</id>
    </interactant>
    <interactant intactId="EBI-465137">
        <id>Q9HDC5</id>
        <label>JPH1</label>
    </interactant>
    <organismsDiffer>false</organismsDiffer>
    <experiments>3</experiments>
</comment>
<comment type="interaction">
    <interactant intactId="EBI-10171534">
        <id>A0PK00</id>
    </interactant>
    <interactant intactId="EBI-12017638">
        <id>P48051</id>
        <label>KCNJ6</label>
    </interactant>
    <organismsDiffer>false</organismsDiffer>
    <experiments>3</experiments>
</comment>
<comment type="interaction">
    <interactant intactId="EBI-10171534">
        <id>A0PK00</id>
    </interactant>
    <interactant intactId="EBI-18096461">
        <id>O43300</id>
        <label>LRRTM2</label>
    </interactant>
    <organismsDiffer>false</organismsDiffer>
    <experiments>3</experiments>
</comment>
<comment type="interaction">
    <interactant intactId="EBI-10171534">
        <id>A0PK00</id>
    </interactant>
    <interactant intactId="EBI-724754">
        <id>O14880</id>
        <label>MGST3</label>
    </interactant>
    <organismsDiffer>false</organismsDiffer>
    <experiments>3</experiments>
</comment>
<comment type="interaction">
    <interactant intactId="EBI-10171534">
        <id>A0PK00</id>
    </interactant>
    <interactant intactId="EBI-750085">
        <id>Q9Y676</id>
        <label>MRPS18B</label>
    </interactant>
    <organismsDiffer>false</organismsDiffer>
    <experiments>3</experiments>
</comment>
<comment type="interaction">
    <interactant intactId="EBI-10171534">
        <id>A0PK00</id>
    </interactant>
    <interactant intactId="EBI-17263240">
        <id>P15941-11</id>
        <label>MUC1</label>
    </interactant>
    <organismsDiffer>false</organismsDiffer>
    <experiments>3</experiments>
</comment>
<comment type="interaction">
    <interactant intactId="EBI-10171534">
        <id>A0PK00</id>
    </interactant>
    <interactant intactId="EBI-10247000">
        <id>Q6IBW4-4</id>
        <label>NCAPH2</label>
    </interactant>
    <organismsDiffer>false</organismsDiffer>
    <experiments>3</experiments>
</comment>
<comment type="interaction">
    <interactant intactId="EBI-10171534">
        <id>A0PK00</id>
    </interactant>
    <interactant intactId="EBI-11337973">
        <id>Q9BRK0</id>
        <label>REEP2</label>
    </interactant>
    <organismsDiffer>false</organismsDiffer>
    <experiments>3</experiments>
</comment>
<comment type="interaction">
    <interactant intactId="EBI-10171534">
        <id>A0PK00</id>
    </interactant>
    <interactant intactId="EBI-7545592">
        <id>Q9H6H4</id>
        <label>REEP4</label>
    </interactant>
    <organismsDiffer>false</organismsDiffer>
    <experiments>3</experiments>
</comment>
<comment type="interaction">
    <interactant intactId="EBI-10171534">
        <id>A0PK00</id>
    </interactant>
    <interactant intactId="EBI-10192441">
        <id>Q86VR2</id>
        <label>RETREG3</label>
    </interactant>
    <organismsDiffer>false</organismsDiffer>
    <experiments>3</experiments>
</comment>
<comment type="interaction">
    <interactant intactId="EBI-10171534">
        <id>A0PK00</id>
    </interactant>
    <interactant intactId="EBI-2466594">
        <id>Q6ZMZ0</id>
        <label>RNF19B</label>
    </interactant>
    <organismsDiffer>false</organismsDiffer>
    <experiments>3</experiments>
</comment>
<comment type="interaction">
    <interactant intactId="EBI-10171534">
        <id>A0PK00</id>
    </interactant>
    <interactant intactId="EBI-348482">
        <id>Q99942</id>
        <label>RNF5</label>
    </interactant>
    <organismsDiffer>false</organismsDiffer>
    <experiments>3</experiments>
</comment>
<comment type="interaction">
    <interactant intactId="EBI-10171534">
        <id>A0PK00</id>
    </interactant>
    <interactant intactId="EBI-17247926">
        <id>Q9NY72</id>
        <label>SCN3B</label>
    </interactant>
    <organismsDiffer>false</organismsDiffer>
    <experiments>3</experiments>
</comment>
<comment type="interaction">
    <interactant intactId="EBI-10171534">
        <id>A0PK00</id>
    </interactant>
    <interactant intactId="EBI-6503765">
        <id>Q8IVP1</id>
        <label>SH3GL3</label>
    </interactant>
    <organismsDiffer>false</organismsDiffer>
    <experiments>3</experiments>
</comment>
<comment type="interaction">
    <interactant intactId="EBI-10171534">
        <id>A0PK00</id>
    </interactant>
    <interactant intactId="EBI-3923031">
        <id>Q14973</id>
        <label>SLC10A1</label>
    </interactant>
    <organismsDiffer>false</organismsDiffer>
    <experiments>3</experiments>
</comment>
<comment type="interaction">
    <interactant intactId="EBI-10171534">
        <id>A0PK00</id>
    </interactant>
    <interactant intactId="EBI-18159983">
        <id>Q3KNW5</id>
        <label>SLC10A6</label>
    </interactant>
    <organismsDiffer>false</organismsDiffer>
    <experiments>3</experiments>
</comment>
<comment type="interaction">
    <interactant intactId="EBI-10171534">
        <id>A0PK00</id>
    </interactant>
    <interactant intactId="EBI-17249797">
        <id>Q8NDX2-2</id>
        <label>SLC17A8</label>
    </interactant>
    <organismsDiffer>false</organismsDiffer>
    <experiments>3</experiments>
</comment>
<comment type="interaction">
    <interactant intactId="EBI-10171534">
        <id>A0PK00</id>
    </interactant>
    <interactant intactId="EBI-17595455">
        <id>P54219-3</id>
        <label>SLC18A1</label>
    </interactant>
    <organismsDiffer>false</organismsDiffer>
    <experiments>3</experiments>
</comment>
<comment type="interaction">
    <interactant intactId="EBI-10171534">
        <id>A0PK00</id>
    </interactant>
    <interactant intactId="EBI-359038">
        <id>P43003</id>
        <label>SLC1A3</label>
    </interactant>
    <organismsDiffer>false</organismsDiffer>
    <experiments>3</experiments>
</comment>
<comment type="interaction">
    <interactant intactId="EBI-10171534">
        <id>A0PK00</id>
    </interactant>
    <interactant intactId="EBI-1211440">
        <id>P27105</id>
        <label>STOM</label>
    </interactant>
    <organismsDiffer>false</organismsDiffer>
    <experiments>3</experiments>
</comment>
<comment type="interaction">
    <interactant intactId="EBI-10171534">
        <id>A0PK00</id>
    </interactant>
    <interactant intactId="EBI-11956649">
        <id>P32856-2</id>
        <label>STX2</label>
    </interactant>
    <organismsDiffer>false</organismsDiffer>
    <experiments>3</experiments>
</comment>
<comment type="interaction">
    <interactant intactId="EBI-10171534">
        <id>A0PK00</id>
    </interactant>
    <interactant intactId="EBI-12947623">
        <id>Q96MV1</id>
        <label>TLCD4</label>
    </interactant>
    <organismsDiffer>false</organismsDiffer>
    <experiments>3</experiments>
</comment>
<comment type="interaction">
    <interactant intactId="EBI-10171534">
        <id>A0PK00</id>
    </interactant>
    <interactant intactId="EBI-7238458">
        <id>Q8IV31</id>
        <label>TMEM139</label>
    </interactant>
    <organismsDiffer>false</organismsDiffer>
    <experiments>3</experiments>
</comment>
<comment type="interaction">
    <interactant intactId="EBI-10171534">
        <id>A0PK00</id>
    </interactant>
    <interactant intactId="EBI-13342951">
        <id>Q96AN5</id>
        <label>TMEM143</label>
    </interactant>
    <organismsDiffer>false</organismsDiffer>
    <experiments>3</experiments>
</comment>
<comment type="interaction">
    <interactant intactId="EBI-10171534">
        <id>A0PK00</id>
    </interactant>
    <interactant intactId="EBI-8638294">
        <id>Q9NUH8</id>
        <label>TMEM14B</label>
    </interactant>
    <organismsDiffer>false</organismsDiffer>
    <experiments>3</experiments>
</comment>
<comment type="interaction">
    <interactant intactId="EBI-10171534">
        <id>A0PK00</id>
    </interactant>
    <interactant intactId="EBI-11742770">
        <id>Q96HE8</id>
        <label>TMEM80</label>
    </interactant>
    <organismsDiffer>false</organismsDiffer>
    <experiments>3</experiments>
</comment>
<comment type="interaction">
    <interactant intactId="EBI-10171534">
        <id>A0PK00</id>
    </interactant>
    <interactant intactId="EBI-12345267">
        <id>O15393-2</id>
        <label>TMPRSS2</label>
    </interactant>
    <organismsDiffer>false</organismsDiffer>
    <experiments>3</experiments>
</comment>
<comment type="interaction">
    <interactant intactId="EBI-10171534">
        <id>A0PK00</id>
    </interactant>
    <interactant intactId="EBI-6447886">
        <id>Q9Y320</id>
        <label>TMX2</label>
    </interactant>
    <organismsDiffer>false</organismsDiffer>
    <experiments>3</experiments>
</comment>
<comment type="interaction">
    <interactant intactId="EBI-10171534">
        <id>A0PK00</id>
    </interactant>
    <interactant intactId="EBI-12837904">
        <id>Q96MV8</id>
        <label>ZDHHC15</label>
    </interactant>
    <organismsDiffer>false</organismsDiffer>
    <experiments>3</experiments>
</comment>
<comment type="subcellular location">
    <subcellularLocation>
        <location evidence="1">Nucleus inner membrane</location>
        <topology evidence="2">Multi-pass membrane protein</topology>
    </subcellularLocation>
</comment>
<comment type="similarity">
    <text evidence="3">Belongs to the TMEM120 family.</text>
</comment>
<protein>
    <recommendedName>
        <fullName evidence="3">Transmembrane protein 120B</fullName>
    </recommendedName>
</protein>
<accession>A0PK00</accession>
<accession>A0PK01</accession>
<accession>B3KX33</accession>
<dbReference type="EMBL" id="AK126568">
    <property type="protein sequence ID" value="BAG54345.1"/>
    <property type="molecule type" value="mRNA"/>
</dbReference>
<dbReference type="EMBL" id="BC127768">
    <property type="protein sequence ID" value="AAI27769.1"/>
    <property type="molecule type" value="mRNA"/>
</dbReference>
<dbReference type="EMBL" id="BC127769">
    <property type="protein sequence ID" value="AAI27770.1"/>
    <property type="molecule type" value="mRNA"/>
</dbReference>
<dbReference type="CCDS" id="CCDS41852.1"/>
<dbReference type="RefSeq" id="NP_001074294.2">
    <property type="nucleotide sequence ID" value="NM_001080825.2"/>
</dbReference>
<dbReference type="RefSeq" id="XP_016874342.1">
    <property type="nucleotide sequence ID" value="XM_017018853.1"/>
</dbReference>
<dbReference type="PDB" id="7F73">
    <property type="method" value="EM"/>
    <property type="resolution" value="4.00 A"/>
    <property type="chains" value="A/B=1-339"/>
</dbReference>
<dbReference type="PDBsum" id="7F73"/>
<dbReference type="EMDB" id="EMD-31484"/>
<dbReference type="SMR" id="A0PK00"/>
<dbReference type="BioGRID" id="126849">
    <property type="interactions" value="120"/>
</dbReference>
<dbReference type="FunCoup" id="A0PK00">
    <property type="interactions" value="511"/>
</dbReference>
<dbReference type="IntAct" id="A0PK00">
    <property type="interactions" value="95"/>
</dbReference>
<dbReference type="STRING" id="9606.ENSP00000404991"/>
<dbReference type="iPTMnet" id="A0PK00"/>
<dbReference type="PhosphoSitePlus" id="A0PK00"/>
<dbReference type="SwissPalm" id="A0PK00"/>
<dbReference type="BioMuta" id="TMEM120B"/>
<dbReference type="jPOST" id="A0PK00"/>
<dbReference type="MassIVE" id="A0PK00"/>
<dbReference type="PaxDb" id="9606-ENSP00000404991"/>
<dbReference type="PeptideAtlas" id="A0PK00"/>
<dbReference type="ProteomicsDB" id="76"/>
<dbReference type="Pumba" id="A0PK00"/>
<dbReference type="Antibodypedia" id="2742">
    <property type="antibodies" value="39 antibodies from 14 providers"/>
</dbReference>
<dbReference type="DNASU" id="144404"/>
<dbReference type="Ensembl" id="ENST00000342607.10">
    <property type="protein sequence ID" value="ENSP00000345152.6"/>
    <property type="gene ID" value="ENSG00000188735.13"/>
</dbReference>
<dbReference type="Ensembl" id="ENST00000449592.7">
    <property type="protein sequence ID" value="ENSP00000404991.2"/>
    <property type="gene ID" value="ENSG00000188735.13"/>
</dbReference>
<dbReference type="GeneID" id="144404"/>
<dbReference type="KEGG" id="hsa:144404"/>
<dbReference type="MANE-Select" id="ENST00000449592.7">
    <property type="protein sequence ID" value="ENSP00000404991.2"/>
    <property type="RefSeq nucleotide sequence ID" value="NM_001080825.2"/>
    <property type="RefSeq protein sequence ID" value="NP_001074294.2"/>
</dbReference>
<dbReference type="UCSC" id="uc001ubc.5">
    <property type="organism name" value="human"/>
</dbReference>
<dbReference type="AGR" id="HGNC:32008"/>
<dbReference type="CTD" id="144404"/>
<dbReference type="DisGeNET" id="144404"/>
<dbReference type="GeneCards" id="TMEM120B"/>
<dbReference type="HGNC" id="HGNC:32008">
    <property type="gene designation" value="TMEM120B"/>
</dbReference>
<dbReference type="HPA" id="ENSG00000188735">
    <property type="expression patterns" value="Tissue enhanced (brain)"/>
</dbReference>
<dbReference type="MIM" id="616551">
    <property type="type" value="gene"/>
</dbReference>
<dbReference type="neXtProt" id="NX_A0PK00"/>
<dbReference type="OpenTargets" id="ENSG00000188735"/>
<dbReference type="PharmGKB" id="PA162405862"/>
<dbReference type="VEuPathDB" id="HostDB:ENSG00000188735"/>
<dbReference type="eggNOG" id="KOG4758">
    <property type="taxonomic scope" value="Eukaryota"/>
</dbReference>
<dbReference type="GeneTree" id="ENSGT00390000007848"/>
<dbReference type="HOGENOM" id="CLU_048749_1_1_1"/>
<dbReference type="InParanoid" id="A0PK00"/>
<dbReference type="OMA" id="WPNTGPW"/>
<dbReference type="OrthoDB" id="2015098at2759"/>
<dbReference type="PAN-GO" id="A0PK00">
    <property type="GO annotations" value="2 GO annotations based on evolutionary models"/>
</dbReference>
<dbReference type="PhylomeDB" id="A0PK00"/>
<dbReference type="TreeFam" id="TF313552"/>
<dbReference type="PathwayCommons" id="A0PK00"/>
<dbReference type="SignaLink" id="A0PK00"/>
<dbReference type="BioGRID-ORCS" id="144404">
    <property type="hits" value="10 hits in 1159 CRISPR screens"/>
</dbReference>
<dbReference type="ChiTaRS" id="TMEM120B">
    <property type="organism name" value="human"/>
</dbReference>
<dbReference type="GenomeRNAi" id="144404"/>
<dbReference type="Pharos" id="A0PK00">
    <property type="development level" value="Tdark"/>
</dbReference>
<dbReference type="PRO" id="PR:A0PK00"/>
<dbReference type="Proteomes" id="UP000005640">
    <property type="component" value="Chromosome 12"/>
</dbReference>
<dbReference type="RNAct" id="A0PK00">
    <property type="molecule type" value="protein"/>
</dbReference>
<dbReference type="Bgee" id="ENSG00000188735">
    <property type="expression patterns" value="Expressed in right hemisphere of cerebellum and 135 other cell types or tissues"/>
</dbReference>
<dbReference type="ExpressionAtlas" id="A0PK00">
    <property type="expression patterns" value="baseline and differential"/>
</dbReference>
<dbReference type="GO" id="GO:0005637">
    <property type="term" value="C:nuclear inner membrane"/>
    <property type="evidence" value="ECO:0000250"/>
    <property type="project" value="UniProtKB"/>
</dbReference>
<dbReference type="GO" id="GO:0045444">
    <property type="term" value="P:fat cell differentiation"/>
    <property type="evidence" value="ECO:0000250"/>
    <property type="project" value="UniProtKB"/>
</dbReference>
<dbReference type="GO" id="GO:0051291">
    <property type="term" value="P:protein heterooligomerization"/>
    <property type="evidence" value="ECO:0000250"/>
    <property type="project" value="UniProtKB"/>
</dbReference>
<dbReference type="InterPro" id="IPR012926">
    <property type="entry name" value="TMEM120A/B"/>
</dbReference>
<dbReference type="PANTHER" id="PTHR21433:SF2">
    <property type="entry name" value="TRANSMEMBRANE PROTEIN 120B"/>
    <property type="match status" value="1"/>
</dbReference>
<dbReference type="PANTHER" id="PTHR21433">
    <property type="entry name" value="TRANSMEMBRANE PROTEIN INDUCED BY TUMOR NECROSIS FACTOR ALPHA"/>
    <property type="match status" value="1"/>
</dbReference>
<dbReference type="Pfam" id="PF07851">
    <property type="entry name" value="TMEM120A-B"/>
    <property type="match status" value="1"/>
</dbReference>
<feature type="chain" id="PRO_0000309529" description="Transmembrane protein 120B">
    <location>
        <begin position="1"/>
        <end position="339"/>
    </location>
</feature>
<feature type="transmembrane region" description="Helical" evidence="2">
    <location>
        <begin position="102"/>
        <end position="124"/>
    </location>
</feature>
<feature type="transmembrane region" description="Helical" evidence="2">
    <location>
        <begin position="132"/>
        <end position="152"/>
    </location>
</feature>
<feature type="transmembrane region" description="Helical" evidence="2">
    <location>
        <begin position="159"/>
        <end position="179"/>
    </location>
</feature>
<feature type="transmembrane region" description="Helical" evidence="2">
    <location>
        <begin position="187"/>
        <end position="207"/>
    </location>
</feature>
<feature type="transmembrane region" description="Helical" evidence="2">
    <location>
        <begin position="270"/>
        <end position="290"/>
    </location>
</feature>
<feature type="transmembrane region" description="Helical" evidence="2">
    <location>
        <begin position="302"/>
        <end position="322"/>
    </location>
</feature>
<feature type="coiled-coil region" evidence="2">
    <location>
        <begin position="1"/>
        <end position="77"/>
    </location>
</feature>
<feature type="sequence conflict" description="In Ref. 2; AAI27770." evidence="3" ref="2">
    <original>D</original>
    <variation>N</variation>
    <location>
        <position position="92"/>
    </location>
</feature>